<dbReference type="EC" id="7.1.2.2" evidence="2"/>
<dbReference type="EMBL" id="BA000011">
    <property type="protein sequence ID" value="BAB59193.1"/>
    <property type="molecule type" value="Genomic_DNA"/>
</dbReference>
<dbReference type="RefSeq" id="WP_010916308.1">
    <property type="nucleotide sequence ID" value="NC_002689.2"/>
</dbReference>
<dbReference type="PDB" id="4O1S">
    <property type="method" value="X-ray"/>
    <property type="resolution" value="2.70 A"/>
    <property type="chains" value="A/B=234-421"/>
</dbReference>
<dbReference type="PDBsum" id="4O1S"/>
<dbReference type="SMR" id="Q97CQ0"/>
<dbReference type="STRING" id="273116.gene:9380816"/>
<dbReference type="PaxDb" id="273116-14324265"/>
<dbReference type="GeneID" id="1441538"/>
<dbReference type="KEGG" id="tvo:TVG0054274"/>
<dbReference type="eggNOG" id="arCOG00868">
    <property type="taxonomic scope" value="Archaea"/>
</dbReference>
<dbReference type="HOGENOM" id="CLU_008162_1_1_2"/>
<dbReference type="OrthoDB" id="115235at2157"/>
<dbReference type="PhylomeDB" id="Q97CQ0"/>
<dbReference type="EvolutionaryTrace" id="Q97CQ0"/>
<dbReference type="Proteomes" id="UP000001017">
    <property type="component" value="Chromosome"/>
</dbReference>
<dbReference type="GO" id="GO:0005886">
    <property type="term" value="C:plasma membrane"/>
    <property type="evidence" value="ECO:0007669"/>
    <property type="project" value="UniProtKB-SubCell"/>
</dbReference>
<dbReference type="GO" id="GO:0005524">
    <property type="term" value="F:ATP binding"/>
    <property type="evidence" value="ECO:0007669"/>
    <property type="project" value="UniProtKB-UniRule"/>
</dbReference>
<dbReference type="GO" id="GO:0046933">
    <property type="term" value="F:proton-transporting ATP synthase activity, rotational mechanism"/>
    <property type="evidence" value="ECO:0007669"/>
    <property type="project" value="UniProtKB-UniRule"/>
</dbReference>
<dbReference type="GO" id="GO:0046961">
    <property type="term" value="F:proton-transporting ATPase activity, rotational mechanism"/>
    <property type="evidence" value="ECO:0007669"/>
    <property type="project" value="InterPro"/>
</dbReference>
<dbReference type="GO" id="GO:0016539">
    <property type="term" value="P:intein-mediated protein splicing"/>
    <property type="evidence" value="ECO:0007669"/>
    <property type="project" value="InterPro"/>
</dbReference>
<dbReference type="GO" id="GO:0042777">
    <property type="term" value="P:proton motive force-driven plasma membrane ATP synthesis"/>
    <property type="evidence" value="ECO:0007669"/>
    <property type="project" value="UniProtKB-UniRule"/>
</dbReference>
<dbReference type="CDD" id="cd18111">
    <property type="entry name" value="ATP-synt_V_A-type_alpha_C"/>
    <property type="match status" value="1"/>
</dbReference>
<dbReference type="CDD" id="cd18119">
    <property type="entry name" value="ATP-synt_V_A-type_alpha_N"/>
    <property type="match status" value="1"/>
</dbReference>
<dbReference type="CDD" id="cd00081">
    <property type="entry name" value="Hint"/>
    <property type="match status" value="1"/>
</dbReference>
<dbReference type="CDD" id="cd01134">
    <property type="entry name" value="V_A-ATPase_A"/>
    <property type="match status" value="1"/>
</dbReference>
<dbReference type="FunFam" id="2.40.30.20:FF:000002">
    <property type="entry name" value="V-type proton ATPase catalytic subunit A"/>
    <property type="match status" value="1"/>
</dbReference>
<dbReference type="Gene3D" id="2.40.30.20">
    <property type="match status" value="1"/>
</dbReference>
<dbReference type="Gene3D" id="2.40.50.100">
    <property type="match status" value="1"/>
</dbReference>
<dbReference type="Gene3D" id="1.10.1140.10">
    <property type="entry name" value="Bovine Mitochondrial F1-atpase, Atp Synthase Beta Chain, Chain D, domain 3"/>
    <property type="match status" value="1"/>
</dbReference>
<dbReference type="Gene3D" id="2.170.16.10">
    <property type="entry name" value="Hedgehog/Intein (Hint) domain"/>
    <property type="match status" value="1"/>
</dbReference>
<dbReference type="Gene3D" id="3.40.50.300">
    <property type="entry name" value="P-loop containing nucleotide triphosphate hydrolases"/>
    <property type="match status" value="2"/>
</dbReference>
<dbReference type="HAMAP" id="MF_00309">
    <property type="entry name" value="ATP_synth_A_arch"/>
    <property type="match status" value="1"/>
</dbReference>
<dbReference type="InterPro" id="IPR055190">
    <property type="entry name" value="ATP-synt_VA_C"/>
</dbReference>
<dbReference type="InterPro" id="IPR031686">
    <property type="entry name" value="ATP-synth_a_Xtn"/>
</dbReference>
<dbReference type="InterPro" id="IPR023366">
    <property type="entry name" value="ATP_synth_asu-like_sf"/>
</dbReference>
<dbReference type="InterPro" id="IPR020003">
    <property type="entry name" value="ATPase_a/bsu_AS"/>
</dbReference>
<dbReference type="InterPro" id="IPR004100">
    <property type="entry name" value="ATPase_F1/V1/A1_a/bsu_N"/>
</dbReference>
<dbReference type="InterPro" id="IPR036121">
    <property type="entry name" value="ATPase_F1/V1/A1_a/bsu_N_sf"/>
</dbReference>
<dbReference type="InterPro" id="IPR000194">
    <property type="entry name" value="ATPase_F1/V1/A1_a/bsu_nucl-bd"/>
</dbReference>
<dbReference type="InterPro" id="IPR024034">
    <property type="entry name" value="ATPase_F1/V1_b/a_C"/>
</dbReference>
<dbReference type="InterPro" id="IPR003586">
    <property type="entry name" value="Hint_dom_C"/>
</dbReference>
<dbReference type="InterPro" id="IPR003587">
    <property type="entry name" value="Hint_dom_N"/>
</dbReference>
<dbReference type="InterPro" id="IPR036844">
    <property type="entry name" value="Hint_dom_sf"/>
</dbReference>
<dbReference type="InterPro" id="IPR030934">
    <property type="entry name" value="Intein_C"/>
</dbReference>
<dbReference type="InterPro" id="IPR006141">
    <property type="entry name" value="Intein_N"/>
</dbReference>
<dbReference type="InterPro" id="IPR027417">
    <property type="entry name" value="P-loop_NTPase"/>
</dbReference>
<dbReference type="InterPro" id="IPR022878">
    <property type="entry name" value="V-ATPase_asu"/>
</dbReference>
<dbReference type="NCBIfam" id="TIGR01443">
    <property type="entry name" value="intein_Cterm"/>
    <property type="match status" value="1"/>
</dbReference>
<dbReference type="NCBIfam" id="TIGR01445">
    <property type="entry name" value="intein_Nterm"/>
    <property type="match status" value="1"/>
</dbReference>
<dbReference type="NCBIfam" id="NF003220">
    <property type="entry name" value="PRK04192.1"/>
    <property type="match status" value="1"/>
</dbReference>
<dbReference type="PANTHER" id="PTHR43607:SF1">
    <property type="entry name" value="H(+)-TRANSPORTING TWO-SECTOR ATPASE"/>
    <property type="match status" value="1"/>
</dbReference>
<dbReference type="PANTHER" id="PTHR43607">
    <property type="entry name" value="V-TYPE PROTON ATPASE CATALYTIC SUBUNIT A"/>
    <property type="match status" value="1"/>
</dbReference>
<dbReference type="Pfam" id="PF00006">
    <property type="entry name" value="ATP-synt_ab"/>
    <property type="match status" value="1"/>
</dbReference>
<dbReference type="Pfam" id="PF02874">
    <property type="entry name" value="ATP-synt_ab_N"/>
    <property type="match status" value="1"/>
</dbReference>
<dbReference type="Pfam" id="PF16886">
    <property type="entry name" value="ATP-synt_ab_Xtn"/>
    <property type="match status" value="1"/>
</dbReference>
<dbReference type="Pfam" id="PF22919">
    <property type="entry name" value="ATP-synt_VA_C"/>
    <property type="match status" value="1"/>
</dbReference>
<dbReference type="Pfam" id="PF14890">
    <property type="entry name" value="Intein_splicing"/>
    <property type="match status" value="1"/>
</dbReference>
<dbReference type="SMART" id="SM00305">
    <property type="entry name" value="HintC"/>
    <property type="match status" value="1"/>
</dbReference>
<dbReference type="SMART" id="SM00306">
    <property type="entry name" value="HintN"/>
    <property type="match status" value="1"/>
</dbReference>
<dbReference type="SUPFAM" id="SSF47917">
    <property type="entry name" value="C-terminal domain of alpha and beta subunits of F1 ATP synthase"/>
    <property type="match status" value="1"/>
</dbReference>
<dbReference type="SUPFAM" id="SSF51294">
    <property type="entry name" value="Hedgehog/intein (Hint) domain"/>
    <property type="match status" value="1"/>
</dbReference>
<dbReference type="SUPFAM" id="SSF50615">
    <property type="entry name" value="N-terminal domain of alpha and beta subunits of F1 ATP synthase"/>
    <property type="match status" value="1"/>
</dbReference>
<dbReference type="SUPFAM" id="SSF52540">
    <property type="entry name" value="P-loop containing nucleoside triphosphate hydrolases"/>
    <property type="match status" value="2"/>
</dbReference>
<dbReference type="PROSITE" id="PS00152">
    <property type="entry name" value="ATPASE_ALPHA_BETA"/>
    <property type="match status" value="1"/>
</dbReference>
<dbReference type="PROSITE" id="PS50818">
    <property type="entry name" value="INTEIN_C_TER"/>
    <property type="match status" value="1"/>
</dbReference>
<dbReference type="PROSITE" id="PS50817">
    <property type="entry name" value="INTEIN_N_TER"/>
    <property type="match status" value="1"/>
</dbReference>
<feature type="chain" id="PRO_0000002473" description="A-type ATP synthase subunit A, 1st part" evidence="1">
    <location>
        <begin position="1"/>
        <end position="235"/>
    </location>
</feature>
<feature type="chain" id="PRO_0000002474" description="Tvo AtpA intein" evidence="1">
    <location>
        <begin position="236"/>
        <end position="421"/>
    </location>
</feature>
<feature type="chain" id="PRO_0000002475" description="A-type ATP synthase subunit A, 2nd part" evidence="1">
    <location>
        <begin position="422"/>
        <end position="776"/>
    </location>
</feature>
<feature type="strand" evidence="4">
    <location>
        <begin position="242"/>
        <end position="245"/>
    </location>
</feature>
<feature type="strand" evidence="4">
    <location>
        <begin position="250"/>
        <end position="252"/>
    </location>
</feature>
<feature type="helix" evidence="4">
    <location>
        <begin position="253"/>
        <end position="262"/>
    </location>
</feature>
<feature type="strand" evidence="4">
    <location>
        <begin position="266"/>
        <end position="271"/>
    </location>
</feature>
<feature type="strand" evidence="4">
    <location>
        <begin position="274"/>
        <end position="289"/>
    </location>
</feature>
<feature type="strand" evidence="4">
    <location>
        <begin position="292"/>
        <end position="314"/>
    </location>
</feature>
<feature type="strand" evidence="4">
    <location>
        <begin position="319"/>
        <end position="322"/>
    </location>
</feature>
<feature type="strand" evidence="4">
    <location>
        <begin position="327"/>
        <end position="332"/>
    </location>
</feature>
<feature type="strand" evidence="4">
    <location>
        <begin position="335"/>
        <end position="340"/>
    </location>
</feature>
<feature type="turn" evidence="4">
    <location>
        <begin position="341"/>
        <end position="343"/>
    </location>
</feature>
<feature type="strand" evidence="4">
    <location>
        <begin position="349"/>
        <end position="353"/>
    </location>
</feature>
<feature type="turn" evidence="4">
    <location>
        <begin position="355"/>
        <end position="357"/>
    </location>
</feature>
<feature type="strand" evidence="4">
    <location>
        <begin position="382"/>
        <end position="401"/>
    </location>
</feature>
<feature type="strand" evidence="4">
    <location>
        <begin position="405"/>
        <end position="407"/>
    </location>
</feature>
<feature type="strand" evidence="4">
    <location>
        <begin position="410"/>
        <end position="412"/>
    </location>
</feature>
<feature type="strand" evidence="4">
    <location>
        <begin position="417"/>
        <end position="420"/>
    </location>
</feature>
<name>AATA_THEVO</name>
<protein>
    <recommendedName>
        <fullName evidence="2">A-type ATP synthase subunit A</fullName>
        <ecNumber evidence="2">7.1.2.2</ecNumber>
    </recommendedName>
    <component>
        <recommendedName>
            <fullName>Tvo AtpA intein</fullName>
        </recommendedName>
        <alternativeName>
            <fullName>Tvo VMA intein</fullName>
        </alternativeName>
    </component>
</protein>
<proteinExistence type="evidence at protein level"/>
<sequence>MGKIVRISGPVVVAEDIENAKMYDVVKVGEMGLIGEIIRIEGNRSTIQVYEDTAGIRPDEKVENTMRPLSVELGPGLLKSIYDGIQRPLDVIKETSGDFIARGLNPPPLDRKKEWDFVPAVKKNDIVYPGQVIGTVQETSLITHRIIVPDGVSGKIKSIYEGKRTVEDVVCTISTEHGDVDVNLMTTWPVRKARRVVRKLPPEIPLVTGQRVIDALFPVAKGGTAAVPGPFGSGKCVSGETPVYLADGKTIKIKDLYSSERKKEDNIVEAGSGEEIIHLKDPIQIYSYVDGTIVRSRSRLLYKGKSSYLVRIETIGGRSVSVTPVHKLFVLTEKGIEEVMASNLKVGDMIAAVAESESEARDCGMSEECVMEAEVYTSLEATFDRVKSIAYEKGDFDVYDLSVPEYGRNFIGGEGLLVLHNTVIQHQLAKWSDANIVVYIGCGERGNEMTEILTTFPELKDPVSGQPLMDRTVLIANTSNMPVAAREASIYTGITIAEYYRDMGYDVALMADSTSRWAEALREISGRLEEMPGEEGYPAYLGRRISEFYERSGRARLVSPEDRFGSITVIGAVSPPGGDISEPVSQNTLRVTRVFWALDASLANRRHFPSINWLNSYSLYTEDLRHWYDENVAKDWGSLRSQAMDILQRESELQEVAQLVGYDAMPEKEKSILDVARIIREDFLQQSAFDEIDSYCSLRKQYLMLKAIMELNSYQSMAIDHGVTMDNLSSLPVREKLSRMKIVPEDQVESYYSSIIKEIHKEYTSFIGEKNAEANI</sequence>
<comment type="function">
    <text evidence="2">Component of the A-type ATP synthase that produces ATP from ADP in the presence of a proton gradient across the membrane. The A chain is the catalytic subunit.</text>
</comment>
<comment type="catalytic activity">
    <reaction evidence="2">
        <text>ATP + H2O + 4 H(+)(in) = ADP + phosphate + 5 H(+)(out)</text>
        <dbReference type="Rhea" id="RHEA:57720"/>
        <dbReference type="ChEBI" id="CHEBI:15377"/>
        <dbReference type="ChEBI" id="CHEBI:15378"/>
        <dbReference type="ChEBI" id="CHEBI:30616"/>
        <dbReference type="ChEBI" id="CHEBI:43474"/>
        <dbReference type="ChEBI" id="CHEBI:456216"/>
        <dbReference type="EC" id="7.1.2.2"/>
    </reaction>
</comment>
<comment type="subunit">
    <text evidence="2">Has multiple subunits with at least A(3), B(3), C, D, E, F, H, I and proteolipid K(x).</text>
</comment>
<comment type="subcellular location">
    <subcellularLocation>
        <location evidence="2">Cell membrane</location>
        <topology evidence="2">Peripheral membrane protein</topology>
    </subcellularLocation>
</comment>
<comment type="PTM">
    <text evidence="3">This protein undergoes a protein self splicing that involves a post-translational excision of the VDE intervening region (intein) followed by peptide ligation.</text>
</comment>
<comment type="miscellaneous">
    <text>The intein interrupts the ATP-binding site.</text>
</comment>
<comment type="similarity">
    <text evidence="2">Belongs to the ATPase alpha/beta chains family.</text>
</comment>
<keyword id="KW-0002">3D-structure</keyword>
<keyword id="KW-0066">ATP synthesis</keyword>
<keyword id="KW-0067">ATP-binding</keyword>
<keyword id="KW-0068">Autocatalytic cleavage</keyword>
<keyword id="KW-1003">Cell membrane</keyword>
<keyword id="KW-0375">Hydrogen ion transport</keyword>
<keyword id="KW-0406">Ion transport</keyword>
<keyword id="KW-0472">Membrane</keyword>
<keyword id="KW-0547">Nucleotide-binding</keyword>
<keyword id="KW-0651">Protein splicing</keyword>
<keyword id="KW-1278">Translocase</keyword>
<keyword id="KW-0813">Transport</keyword>
<organism>
    <name type="scientific">Thermoplasma volcanium (strain ATCC 51530 / DSM 4299 / JCM 9571 / NBRC 15438 / GSS1)</name>
    <dbReference type="NCBI Taxonomy" id="273116"/>
    <lineage>
        <taxon>Archaea</taxon>
        <taxon>Methanobacteriati</taxon>
        <taxon>Thermoplasmatota</taxon>
        <taxon>Thermoplasmata</taxon>
        <taxon>Thermoplasmatales</taxon>
        <taxon>Thermoplasmataceae</taxon>
        <taxon>Thermoplasma</taxon>
    </lineage>
</organism>
<reference key="1">
    <citation type="journal article" date="2000" name="Proc. Natl. Acad. Sci. U.S.A.">
        <title>Archaeal adaptation to higher temperatures revealed by genomic sequence of Thermoplasma volcanium.</title>
        <authorList>
            <person name="Kawashima T."/>
            <person name="Amano N."/>
            <person name="Koike H."/>
            <person name="Makino S."/>
            <person name="Higuchi S."/>
            <person name="Kawashima-Ohya Y."/>
            <person name="Watanabe K."/>
            <person name="Yamazaki M."/>
            <person name="Kanehori K."/>
            <person name="Kawamoto T."/>
            <person name="Nunoshiba T."/>
            <person name="Yamamoto Y."/>
            <person name="Aramaki H."/>
            <person name="Makino K."/>
            <person name="Suzuki M."/>
        </authorList>
    </citation>
    <scope>NUCLEOTIDE SEQUENCE [LARGE SCALE GENOMIC DNA]</scope>
    <source>
        <strain>ATCC 51530 / DSM 4299 / JCM 9571 / NBRC 15438 / GSS1</strain>
    </source>
</reference>
<gene>
    <name evidence="2" type="primary">atpA</name>
    <name type="ordered locus">TV0051</name>
    <name type="ORF">TVG0054274</name>
</gene>
<evidence type="ECO:0000255" key="1"/>
<evidence type="ECO:0000255" key="2">
    <source>
        <dbReference type="HAMAP-Rule" id="MF_00309"/>
    </source>
</evidence>
<evidence type="ECO:0000305" key="3"/>
<evidence type="ECO:0007829" key="4">
    <source>
        <dbReference type="PDB" id="4O1S"/>
    </source>
</evidence>
<accession>Q97CQ0</accession>